<dbReference type="EMBL" id="L10328">
    <property type="protein sequence ID" value="AAA62098.1"/>
    <property type="status" value="ALT_FRAME"/>
    <property type="molecule type" value="Genomic_DNA"/>
</dbReference>
<dbReference type="EMBL" id="L10328">
    <property type="protein sequence ID" value="AAA62097.1"/>
    <property type="status" value="ALT_FRAME"/>
    <property type="molecule type" value="Genomic_DNA"/>
</dbReference>
<dbReference type="EMBL" id="U00096">
    <property type="protein sequence ID" value="AAT48203.1"/>
    <property type="molecule type" value="Genomic_DNA"/>
</dbReference>
<dbReference type="EMBL" id="AP009048">
    <property type="protein sequence ID" value="BAE77543.1"/>
    <property type="molecule type" value="Genomic_DNA"/>
</dbReference>
<dbReference type="EMBL" id="K00826">
    <property type="status" value="NOT_ANNOTATED_CDS"/>
    <property type="molecule type" value="Genomic_DNA"/>
</dbReference>
<dbReference type="EMBL" id="V00263">
    <property type="status" value="NOT_ANNOTATED_CDS"/>
    <property type="molecule type" value="Genomic_DNA"/>
</dbReference>
<dbReference type="PIR" id="B65178">
    <property type="entry name" value="QQECO3"/>
</dbReference>
<dbReference type="RefSeq" id="WP_000956642.1">
    <property type="nucleotide sequence ID" value="NZ_STEB01000015.1"/>
</dbReference>
<dbReference type="RefSeq" id="YP_026243.1">
    <property type="nucleotide sequence ID" value="NC_000913.3"/>
</dbReference>
<dbReference type="PDB" id="7UGC">
    <property type="method" value="NMR"/>
    <property type="chains" value="A=1-191"/>
</dbReference>
<dbReference type="PDBsum" id="7UGC"/>
<dbReference type="SMR" id="P0ADN0"/>
<dbReference type="BioGRID" id="4261397">
    <property type="interactions" value="392"/>
</dbReference>
<dbReference type="BioGRID" id="852559">
    <property type="interactions" value="2"/>
</dbReference>
<dbReference type="DIP" id="DIP-47951N"/>
<dbReference type="FunCoup" id="P0ADN0">
    <property type="interactions" value="37"/>
</dbReference>
<dbReference type="IntAct" id="P0ADN0">
    <property type="interactions" value="5"/>
</dbReference>
<dbReference type="STRING" id="511145.b3745"/>
<dbReference type="PaxDb" id="511145-b3745"/>
<dbReference type="EnsemblBacteria" id="AAT48203">
    <property type="protein sequence ID" value="AAT48203"/>
    <property type="gene ID" value="b3745"/>
</dbReference>
<dbReference type="GeneID" id="93778222"/>
<dbReference type="GeneID" id="948257"/>
<dbReference type="KEGG" id="ecj:JW5610"/>
<dbReference type="KEGG" id="eco:b3745"/>
<dbReference type="KEGG" id="ecoc:C3026_20290"/>
<dbReference type="PATRIC" id="fig|1411691.4.peg.2955"/>
<dbReference type="EchoBASE" id="EB1681"/>
<dbReference type="eggNOG" id="COG2425">
    <property type="taxonomic scope" value="Bacteria"/>
</dbReference>
<dbReference type="HOGENOM" id="CLU_022130_0_0_6"/>
<dbReference type="InParanoid" id="P0ADN0"/>
<dbReference type="OMA" id="CDQWYQS"/>
<dbReference type="OrthoDB" id="387240at2"/>
<dbReference type="PhylomeDB" id="P0ADN0"/>
<dbReference type="BioCyc" id="EcoCyc:EG11730-MONOMER"/>
<dbReference type="PRO" id="PR:P0ADN0"/>
<dbReference type="Proteomes" id="UP000000625">
    <property type="component" value="Chromosome"/>
</dbReference>
<dbReference type="GO" id="GO:0005829">
    <property type="term" value="C:cytosol"/>
    <property type="evidence" value="ECO:0000314"/>
    <property type="project" value="EcoCyc"/>
</dbReference>
<dbReference type="GO" id="GO:0016020">
    <property type="term" value="C:membrane"/>
    <property type="evidence" value="ECO:0000314"/>
    <property type="project" value="EcoCyc"/>
</dbReference>
<dbReference type="CDD" id="cd01462">
    <property type="entry name" value="VWA_YIEM_type"/>
    <property type="match status" value="1"/>
</dbReference>
<dbReference type="Gene3D" id="3.40.50.410">
    <property type="entry name" value="von Willebrand factor, type A domain"/>
    <property type="match status" value="1"/>
</dbReference>
<dbReference type="HAMAP" id="MF_01626">
    <property type="entry name" value="ViaA"/>
    <property type="match status" value="1"/>
</dbReference>
<dbReference type="InterPro" id="IPR008912">
    <property type="entry name" value="Uncharacterised_CoxE"/>
</dbReference>
<dbReference type="InterPro" id="IPR023481">
    <property type="entry name" value="Uncharacterised_ViaA"/>
</dbReference>
<dbReference type="InterPro" id="IPR002035">
    <property type="entry name" value="VWF_A"/>
</dbReference>
<dbReference type="InterPro" id="IPR036465">
    <property type="entry name" value="vWFA_dom_sf"/>
</dbReference>
<dbReference type="NCBIfam" id="NF008230">
    <property type="entry name" value="PRK10997.1"/>
    <property type="match status" value="1"/>
</dbReference>
<dbReference type="PANTHER" id="PTHR36846">
    <property type="entry name" value="PROTEIN VIAA"/>
    <property type="match status" value="1"/>
</dbReference>
<dbReference type="PANTHER" id="PTHR36846:SF1">
    <property type="entry name" value="PROTEIN VIAA"/>
    <property type="match status" value="1"/>
</dbReference>
<dbReference type="Pfam" id="PF05762">
    <property type="entry name" value="VWA_CoxE"/>
    <property type="match status" value="1"/>
</dbReference>
<dbReference type="SMART" id="SM00327">
    <property type="entry name" value="VWA"/>
    <property type="match status" value="1"/>
</dbReference>
<dbReference type="SUPFAM" id="SSF53300">
    <property type="entry name" value="vWA-like"/>
    <property type="match status" value="1"/>
</dbReference>
<name>VIAA_ECOLI</name>
<reference key="1">
    <citation type="journal article" date="1993" name="Genomics">
        <title>DNA sequence and analysis of 136 kilobases of the Escherichia coli genome: organizational symmetry around the origin of replication.</title>
        <authorList>
            <person name="Burland V.D."/>
            <person name="Plunkett G. III"/>
            <person name="Daniels D.L."/>
            <person name="Blattner F.R."/>
        </authorList>
    </citation>
    <scope>NUCLEOTIDE SEQUENCE [LARGE SCALE GENOMIC DNA]</scope>
    <source>
        <strain>K12 / MG1655 / ATCC 47076</strain>
    </source>
</reference>
<reference key="2">
    <citation type="journal article" date="1997" name="Science">
        <title>The complete genome sequence of Escherichia coli K-12.</title>
        <authorList>
            <person name="Blattner F.R."/>
            <person name="Plunkett G. III"/>
            <person name="Bloch C.A."/>
            <person name="Perna N.T."/>
            <person name="Burland V."/>
            <person name="Riley M."/>
            <person name="Collado-Vides J."/>
            <person name="Glasner J.D."/>
            <person name="Rode C.K."/>
            <person name="Mayhew G.F."/>
            <person name="Gregor J."/>
            <person name="Davis N.W."/>
            <person name="Kirkpatrick H.A."/>
            <person name="Goeden M.A."/>
            <person name="Rose D.J."/>
            <person name="Mau B."/>
            <person name="Shao Y."/>
        </authorList>
    </citation>
    <scope>NUCLEOTIDE SEQUENCE [LARGE SCALE GENOMIC DNA]</scope>
    <scope>SEQUENCE REVISION</scope>
    <source>
        <strain>K12 / MG1655 / ATCC 47076</strain>
    </source>
</reference>
<reference key="3">
    <citation type="journal article" date="2006" name="Nucleic Acids Res.">
        <title>Escherichia coli K-12: a cooperatively developed annotation snapshot -- 2005.</title>
        <authorList>
            <person name="Riley M."/>
            <person name="Abe T."/>
            <person name="Arnaud M.B."/>
            <person name="Berlyn M.K.B."/>
            <person name="Blattner F.R."/>
            <person name="Chaudhuri R.R."/>
            <person name="Glasner J.D."/>
            <person name="Horiuchi T."/>
            <person name="Keseler I.M."/>
            <person name="Kosuge T."/>
            <person name="Mori H."/>
            <person name="Perna N.T."/>
            <person name="Plunkett G. III"/>
            <person name="Rudd K.E."/>
            <person name="Serres M.H."/>
            <person name="Thomas G.H."/>
            <person name="Thomson N.R."/>
            <person name="Wishart D."/>
            <person name="Wanner B.L."/>
        </authorList>
    </citation>
    <scope>SEQUENCE REVISION</scope>
</reference>
<reference key="4">
    <citation type="journal article" date="2006" name="Mol. Syst. Biol.">
        <title>Highly accurate genome sequences of Escherichia coli K-12 strains MG1655 and W3110.</title>
        <authorList>
            <person name="Hayashi K."/>
            <person name="Morooka N."/>
            <person name="Yamamoto Y."/>
            <person name="Fujita K."/>
            <person name="Isono K."/>
            <person name="Choi S."/>
            <person name="Ohtsubo E."/>
            <person name="Baba T."/>
            <person name="Wanner B.L."/>
            <person name="Mori H."/>
            <person name="Horiuchi T."/>
        </authorList>
    </citation>
    <scope>NUCLEOTIDE SEQUENCE [LARGE SCALE GENOMIC DNA]</scope>
    <source>
        <strain>K12 / W3110 / ATCC 27325 / DSM 5911</strain>
    </source>
</reference>
<reference key="5">
    <citation type="journal article" date="1983" name="Gene">
        <title>The replication origin region of Escherichia coli: nucleotide sequence and functional units.</title>
        <authorList>
            <person name="Buhk H.-J."/>
            <person name="Messer W."/>
        </authorList>
    </citation>
    <scope>NUCLEOTIDE SEQUENCE [GENOMIC DNA] OF 184-483</scope>
</reference>
<reference key="6">
    <citation type="journal article" date="1981" name="Nucleic Acids Res.">
        <title>Nucleotide sequence of the asnA gene coding for asparagine synthetase of E. coli K-12.</title>
        <authorList>
            <person name="Nakamura M."/>
            <person name="Yamada M."/>
            <person name="Hirota Y."/>
            <person name="Sugimoto K."/>
            <person name="Oka A."/>
            <person name="Takanami M."/>
        </authorList>
    </citation>
    <scope>NUCLEOTIDE SEQUENCE [GENOMIC DNA] OF 438-483</scope>
    <source>
        <strain>K12</strain>
    </source>
</reference>
<reference key="7">
    <citation type="journal article" date="2006" name="J. Biol. Chem.">
        <title>Formation of a distinctive complex between the inducible bacterial lysine decarboxylase and a novel AAA+ ATPase.</title>
        <authorList>
            <person name="Snider J."/>
            <person name="Gutsche I."/>
            <person name="Lin M."/>
            <person name="Baby S."/>
            <person name="Cox B."/>
            <person name="Butland G."/>
            <person name="Greenblatt J."/>
            <person name="Emili A."/>
            <person name="Houry W.A."/>
        </authorList>
    </citation>
    <scope>FUNCTION</scope>
    <scope>INTERACTION WITH RAVA</scope>
    <scope>INDUCTION</scope>
    <source>
        <strain>K12 / MG1655 / ATCC 47076</strain>
    </source>
</reference>
<reference key="8">
    <citation type="journal article" date="2014" name="PLoS ONE">
        <title>The MoxR ATPase RavA and its cofactor ViaA interact with the NADH:ubiquinone oxidoreductase I in Escherichia coli.</title>
        <authorList>
            <person name="Wong K.S."/>
            <person name="Snider J.D."/>
            <person name="Graham C."/>
            <person name="Greenblatt J.F."/>
            <person name="Emili A."/>
            <person name="Babu M."/>
            <person name="Houry W.A."/>
        </authorList>
    </citation>
    <scope>FUNCTION</scope>
    <scope>INTERACTION WITH NUO SUBUNITS</scope>
    <scope>SUBCELLULAR LOCATION</scope>
    <source>
        <strain>K12 / MG1655 / ATCC 47076</strain>
    </source>
</reference>
<reference key="9">
    <citation type="journal article" date="2017" name="J. Mol. Biol.">
        <title>The RavA-ViaA Chaperone-Like System Interacts with and Modulates the Activity of the Fumarate Reductase Respiratory Complex.</title>
        <authorList>
            <person name="Wong K.S."/>
            <person name="Bhandari V."/>
            <person name="Janga S.C."/>
            <person name="Houry W.A."/>
        </authorList>
    </citation>
    <scope>FUNCTION</scope>
    <scope>INTERACTION WITH RAVA AND FRDA</scope>
    <scope>INDUCTION</scope>
    <scope>DOMAIN</scope>
</reference>
<reference key="10">
    <citation type="journal article" date="2022" name="Nat. Commun.">
        <title>The AAA+ ATPase RavA and its binding partner ViaA modulate E. coli aminoglycoside sensitivity through interaction with the inner membrane.</title>
        <authorList>
            <person name="Felix J."/>
            <person name="Bumba L."/>
            <person name="Liesche C."/>
            <person name="Fraudeau A."/>
            <person name="Rebeille F."/>
            <person name="El Khoury J.Y."/>
            <person name="Huard K."/>
            <person name="Gallet B."/>
            <person name="Moriscot C."/>
            <person name="Kleman J.P."/>
            <person name="Duhoo Y."/>
            <person name="Jessop M."/>
            <person name="Kandiah E."/>
            <person name="Barras F."/>
            <person name="Jouhet J."/>
            <person name="Gutsche I."/>
        </authorList>
    </citation>
    <scope>FUNCTION</scope>
    <scope>SUBUNIT</scope>
    <scope>INTERACTION WITH RAVA</scope>
    <scope>INTERACTION WITH PHOSPHOLIPIDS</scope>
    <scope>SUBCELLULAR LOCATION</scope>
    <scope>DOMAIN</scope>
    <scope>MUTAGENESIS OF ARG-476 AND ARG-479</scope>
</reference>
<reference key="11">
    <citation type="journal article" date="2023" name="MBio">
        <title>Bioenergetic State of Escherichia coli Controls Aminoglycoside Susceptibility.</title>
        <authorList>
            <person name="El Khoury J.Y."/>
            <person name="Zamarreno Beas J."/>
            <person name="Huguenot A."/>
            <person name="Py B."/>
            <person name="Barras F."/>
        </authorList>
    </citation>
    <scope>FUNCTION</scope>
    <source>
        <strain>K12 / MG1655 / ATCC 47076</strain>
    </source>
</reference>
<reference evidence="12" key="12">
    <citation type="journal article" date="2023" name="J. Biol. Chem.">
        <title>The RavA-ViaA chaperone complex modulates bacterial persistence through its association with the fumarate reductase enzyme.</title>
        <authorList>
            <person name="Bhandari V."/>
            <person name="Reichheld S.E."/>
            <person name="Houliston S."/>
            <person name="Lemak A."/>
            <person name="Arrowsmith C.H."/>
            <person name="Sharpe S."/>
            <person name="Houry W.A."/>
        </authorList>
    </citation>
    <scope>STRUCTURE BY NMR OF 1-191</scope>
    <scope>FUNCTION</scope>
    <scope>INTERACTION WITH RAVA</scope>
    <scope>DOMAIN</scope>
    <scope>DISRUPTION PHENOTYPE</scope>
    <source>
        <strain>K12 / MG1655 / ATCC 47076</strain>
    </source>
</reference>
<proteinExistence type="evidence at protein level"/>
<protein>
    <recommendedName>
        <fullName evidence="9">Regulatory protein ViaA</fullName>
    </recommendedName>
    <alternativeName>
        <fullName evidence="8">VWA interacting with AAA+ ATPase</fullName>
    </alternativeName>
</protein>
<keyword id="KW-0002">3D-structure</keyword>
<keyword id="KW-0997">Cell inner membrane</keyword>
<keyword id="KW-1003">Cell membrane</keyword>
<keyword id="KW-0143">Chaperone</keyword>
<keyword id="KW-0963">Cytoplasm</keyword>
<keyword id="KW-0472">Membrane</keyword>
<keyword id="KW-1185">Reference proteome</keyword>
<evidence type="ECO:0000255" key="1">
    <source>
        <dbReference type="HAMAP-Rule" id="MF_01626"/>
    </source>
</evidence>
<evidence type="ECO:0000269" key="2">
    <source>
    </source>
</evidence>
<evidence type="ECO:0000269" key="3">
    <source>
    </source>
</evidence>
<evidence type="ECO:0000269" key="4">
    <source>
    </source>
</evidence>
<evidence type="ECO:0000269" key="5">
    <source>
    </source>
</evidence>
<evidence type="ECO:0000269" key="6">
    <source>
    </source>
</evidence>
<evidence type="ECO:0000269" key="7">
    <source>
    </source>
</evidence>
<evidence type="ECO:0000303" key="8">
    <source>
    </source>
</evidence>
<evidence type="ECO:0000305" key="9"/>
<evidence type="ECO:0000305" key="10">
    <source>
    </source>
</evidence>
<evidence type="ECO:0000305" key="11">
    <source>
    </source>
</evidence>
<evidence type="ECO:0007744" key="12">
    <source>
        <dbReference type="PDB" id="7UGC"/>
    </source>
</evidence>
<feature type="chain" id="PRO_0000196583" description="Regulatory protein ViaA">
    <location>
        <begin position="1"/>
        <end position="483"/>
    </location>
</feature>
<feature type="region of interest" description="N-terminal domain NTV" evidence="11">
    <location>
        <begin position="1"/>
        <end position="191"/>
    </location>
</feature>
<feature type="region of interest" description="Flexible middle domain MD" evidence="11">
    <location>
        <begin position="192"/>
        <end position="311"/>
    </location>
</feature>
<feature type="region of interest" description="VWA domain" evidence="10 11">
    <location>
        <begin position="312"/>
        <end position="483"/>
    </location>
</feature>
<feature type="mutagenesis site" description="Attenuates interaction with lipids; when associated with A-479." evidence="5">
    <original>R</original>
    <variation>A</variation>
    <location>
        <position position="476"/>
    </location>
</feature>
<feature type="mutagenesis site" description="Abrogates interaction with lipids, contains slightly but statistically significantly fewer lipids and increases resistance to gentamicin under fumarate respiratory conditions; when associated with E-479." evidence="5">
    <original>R</original>
    <variation>E</variation>
    <location>
        <position position="476"/>
    </location>
</feature>
<feature type="mutagenesis site" description="Attenuates interaction with lipids; when associated with A-476." evidence="5">
    <original>R</original>
    <variation>A</variation>
    <location>
        <position position="479"/>
    </location>
</feature>
<feature type="mutagenesis site" description="Abrogates interaction with lipids, contains slightly but statistically significantly fewer lipids and increases resistance to gentamicin under fumarate respiratory conditions; when associated with E-476." evidence="5">
    <original>R</original>
    <variation>E</variation>
    <location>
        <position position="479"/>
    </location>
</feature>
<organism>
    <name type="scientific">Escherichia coli (strain K12)</name>
    <dbReference type="NCBI Taxonomy" id="83333"/>
    <lineage>
        <taxon>Bacteria</taxon>
        <taxon>Pseudomonadati</taxon>
        <taxon>Pseudomonadota</taxon>
        <taxon>Gammaproteobacteria</taxon>
        <taxon>Enterobacterales</taxon>
        <taxon>Enterobacteriaceae</taxon>
        <taxon>Escherichia</taxon>
    </lineage>
</organism>
<gene>
    <name evidence="8" type="primary">viaA</name>
    <name type="synonym">yieD</name>
    <name type="synonym">yieM</name>
    <name type="ordered locus">b3745</name>
    <name type="ordered locus">JW5610</name>
</gene>
<sequence length="483" mass="55907">MLTLDTLNVMLAVSEEGLIEEMIIALLASPQLAVFFEKFPRLKAAITDDVPRWREALRSRLKDARVPPELTEEVMCYQQSQLLSTPQFIVQLPQILDLLHRLNSPWAEQARQLVDANSTITSALHTLFLQRWRLSLIVQATTLNQQLLEEEREQLLSEVQERMTLSGQLEPILADNNTAAGRLWDMSAGQLKRGDYQLIVKYGEFLNEQPELKRLAEQLGRSREAKSIPRNDAQMETFRTMVREPATVPEQVDGLQQSDDILRLLPPELATLGITELEYEFYRRLVEKQLLTYRLHGESWREKVIERPVVHKDYDEQPRGPFIVCVDTSGSMGGFNEQCAKAFCLALMRIALAENRRCYIMLFSTEIVRYELSGPQGIEQAIRFLSQQFRGGTDLASCFRAIMERLQSREWFDADAVVISDFIAQRLPDDVTSKVKELQRVHQHRFHAVAMSAHGKPGIMRIFDHIWRFDTGMRSRLLRRWRR</sequence>
<accession>P0ADN0</accession>
<accession>P03818</accession>
<accession>P31472</accession>
<accession>Q2M863</accession>
<accession>Q6BF11</accession>
<accession>Q8XAX6</accession>
<comment type="function">
    <text evidence="2 3 4 5 6 7">Component of the RavA-ViaA chaperone complex, which may act on the membrane to optimize the function of some of the respiratory chains (PubMed:16301313, PubMed:24454883, PubMed:27979649, PubMed:36127320, PubMed:36625597). ViaA stimulates the ATPase activity of RavA (PubMed:16301313, PubMed:27979649, PubMed:37660904).</text>
</comment>
<comment type="function">
    <text evidence="3 4 5 6 7">The RavA-ViaA system is involved in the regulation of two respiratory complexes, the fumarate reductase (Frd) electron transport complex and the NADH-quinone oxidoreductase complex (NDH-1 or Nuo complex) (PubMed:24454883, PubMed:27979649). It modulates the activity of the Frd complex, signifying a potential regulatory function during bacterial anaerobic respiration with fumarate as the terminal electron acceptor (PubMed:27979649). Interaction of RavA-ViaA with FrdA results in a decrease in Frd activity (PubMed:27979649). It also interacts with the Nuo complex, known to be involved in both the aerobic and the anaerobic respiration (PubMed:24454883). The RavA-ViaA system binds to specific membrane phospholipids, and might chaperone certain respiratory complexes by acting on lipid microdomains in which these complexes are inserted (PubMed:36127320). The RavA-ViaA system also plays a negative role in bacterial persistence upon treatment with antibiotics through the association of the chaperone complex with Frd (PubMed:37660904). It sensitizes cells to sublethal concentrations of aminoglycoside (AG) antibiotics (PubMed:36127320, PubMed:36625597, PubMed:37660904). The system can facilitate uptake of AG across the membrane when cells are in a low energy state (PubMed:36625597). It sensitizes cells to AG through a proton motive force-dependent mechanism (PubMed:36127320, PubMed:36625597). Under fumarate respiration conditions, it sensitizes cells to AG via a FrdA-dependent mechanism (PubMed:36625597). It does not sensitize cells grown under nitrate respiration to gentamicin (PubMed:36625597).</text>
</comment>
<comment type="subunit">
    <text evidence="2 3 4 5 7">Homodimer (PubMed:36127320). Interacts with RavA (PubMed:16301313, PubMed:27979649, PubMed:36127320, PubMed:37660904). Lipid-bound ViaA is still capable of interacting with RavA (PubMed:36127320). Interacts with specific subunits of the NADH:ubiquinone oxidoreductase I complex (NDH-1 or Nuo complex), particularly with NuoA and NuoF under aerobic conditions, and with the fused NuoCD under anaerobic conditions (PubMed:24454883). Interacts with uncomplexed FrdA, the flavin-containing subunit of the Frd complex, in oxygen-starved cells and the interaction is modulated by RavA (PubMed:27979649).</text>
</comment>
<comment type="subcellular location">
    <subcellularLocation>
        <location evidence="3 5">Cytoplasm</location>
    </subcellularLocation>
    <subcellularLocation>
        <location evidence="3 5">Cell inner membrane</location>
        <topology evidence="5">Peripheral membrane protein</topology>
        <orientation evidence="5">Cytoplasmic side</orientation>
    </subcellularLocation>
    <text evidence="5">Localizes to the membrane via interaction with specific lipids.</text>
</comment>
<comment type="induction">
    <text evidence="2 4">Part of the ravA-viaA operon, which is under the direct control of sigma S in aerobically grown cells (PubMed:16301313). In cells grown under oxygen-limiting conditions, expression is largely dependent on the anaerobic transcriptional regulator Fnr (PubMed:27979649). The operon is coexpressed with multiple anaerobic respiratory genes, many of which are regulated by Fnr (PubMed:27979649).</text>
</comment>
<comment type="domain">
    <text evidence="4 5 7">A protomer can be divided into three domains: a highly alpha helical N-terminal domain (NTV), a flexible middle domain (MD) and a C-terminal VWA domain (CTV) (PubMed:37660904). The MD domain interacts with the triple-helical domain of RavA and increases its ATPase activity (PubMed:37660904). Interacts with free FrdA through the C-terminal VWA domain (PubMed:27979649). The C-terminus region also mediates interactions with phospholipids at the inner membrane (PubMed:36127320).</text>
</comment>
<comment type="disruption phenotype">
    <text evidence="7">The double ravA-viaA deletion mutant shows increased persistence when grown in the presence of fumarate and kanamycin.</text>
</comment>
<comment type="similarity">
    <text evidence="1 9">Belongs to the ViaA family.</text>
</comment>
<comment type="sequence caution" evidence="9">
    <conflict type="frameshift">
        <sequence resource="EMBL-CDS" id="AAA62097"/>
    </conflict>
</comment>
<comment type="sequence caution" evidence="9">
    <conflict type="frameshift">
        <sequence resource="EMBL-CDS" id="AAA62098"/>
    </conflict>
</comment>
<comment type="sequence caution" evidence="9">
    <conflict type="frameshift">
        <sequence resource="EMBL" id="V00263"/>
    </conflict>
</comment>